<name>GUAC_STRPF</name>
<comment type="function">
    <text evidence="1">Catalyzes the irreversible NADPH-dependent deamination of GMP to IMP. It functions in the conversion of nucleobase, nucleoside and nucleotide derivatives of G to A nucleotides, and in maintaining the intracellular balance of A and G nucleotides.</text>
</comment>
<comment type="catalytic activity">
    <reaction evidence="1">
        <text>IMP + NH4(+) + NADP(+) = GMP + NADPH + 2 H(+)</text>
        <dbReference type="Rhea" id="RHEA:17185"/>
        <dbReference type="ChEBI" id="CHEBI:15378"/>
        <dbReference type="ChEBI" id="CHEBI:28938"/>
        <dbReference type="ChEBI" id="CHEBI:57783"/>
        <dbReference type="ChEBI" id="CHEBI:58053"/>
        <dbReference type="ChEBI" id="CHEBI:58115"/>
        <dbReference type="ChEBI" id="CHEBI:58349"/>
        <dbReference type="EC" id="1.7.1.7"/>
    </reaction>
</comment>
<comment type="similarity">
    <text evidence="1">Belongs to the IMPDH/GMPR family. GuaC type 2 subfamily.</text>
</comment>
<comment type="sequence caution" evidence="2">
    <conflict type="erroneous initiation">
        <sequence resource="EMBL-CDS" id="ABF37956"/>
    </conflict>
</comment>
<sequence length="327" mass="35960">MFNDIPVFDYEDIQLIPNKCIITSRSQADTSVTLGKYQFKLPVIPANMQTIIDETIAEQLAKEGYFYIMHRFDEDSRKPFIKRMHEQGLIASISVGVKAYEYEFVTSLKEDTPEFITIDIAHGHANSVIDMIKHIKTELPETFVIAGNVGTPEAVRELENAGADATKVGIGPGKVCITKVKTGFGTGGWQLAALRWCAKAARKPIIADGGIRTHGDIAKSIRFGASMVMIGSLFAGHIESPGKTVEVNGETFKEYYGSASAYQKGEHKNVEGKKILLPTKGHLSDTLTEMQQDLQSSISYAGGKDLDSLRHVDYVIVKNSIWNGDSI</sequence>
<gene>
    <name evidence="1" type="primary">guaC</name>
    <name type="ordered locus">MGAS10750_Spy1006</name>
</gene>
<feature type="chain" id="PRO_0000292058" description="GMP reductase">
    <location>
        <begin position="1"/>
        <end position="327"/>
    </location>
</feature>
<feature type="active site" description="Thioimidate intermediate" evidence="1">
    <location>
        <position position="176"/>
    </location>
</feature>
<feature type="binding site" evidence="1">
    <location>
        <begin position="205"/>
        <end position="228"/>
    </location>
    <ligand>
        <name>NADP(+)</name>
        <dbReference type="ChEBI" id="CHEBI:58349"/>
    </ligand>
</feature>
<keyword id="KW-0521">NADP</keyword>
<keyword id="KW-0560">Oxidoreductase</keyword>
<evidence type="ECO:0000255" key="1">
    <source>
        <dbReference type="HAMAP-Rule" id="MF_01511"/>
    </source>
</evidence>
<evidence type="ECO:0000305" key="2"/>
<dbReference type="EC" id="1.7.1.7" evidence="1"/>
<dbReference type="EMBL" id="CP000262">
    <property type="protein sequence ID" value="ABF37956.1"/>
    <property type="status" value="ALT_INIT"/>
    <property type="molecule type" value="Genomic_DNA"/>
</dbReference>
<dbReference type="SMR" id="Q1J6M7"/>
<dbReference type="KEGG" id="spi:MGAS10750_Spy1006"/>
<dbReference type="HOGENOM" id="CLU_022552_5_0_9"/>
<dbReference type="Proteomes" id="UP000002434">
    <property type="component" value="Chromosome"/>
</dbReference>
<dbReference type="GO" id="GO:0005829">
    <property type="term" value="C:cytosol"/>
    <property type="evidence" value="ECO:0007669"/>
    <property type="project" value="TreeGrafter"/>
</dbReference>
<dbReference type="GO" id="GO:1902560">
    <property type="term" value="C:GMP reductase complex"/>
    <property type="evidence" value="ECO:0007669"/>
    <property type="project" value="InterPro"/>
</dbReference>
<dbReference type="GO" id="GO:0003920">
    <property type="term" value="F:GMP reductase activity"/>
    <property type="evidence" value="ECO:0007669"/>
    <property type="project" value="UniProtKB-UniRule"/>
</dbReference>
<dbReference type="GO" id="GO:0006163">
    <property type="term" value="P:purine nucleotide metabolic process"/>
    <property type="evidence" value="ECO:0007669"/>
    <property type="project" value="UniProtKB-UniRule"/>
</dbReference>
<dbReference type="CDD" id="cd00381">
    <property type="entry name" value="IMPDH"/>
    <property type="match status" value="1"/>
</dbReference>
<dbReference type="FunFam" id="3.20.20.70:FF:000424">
    <property type="entry name" value="Inosine-5'-monophosphate dehydrogenase 2"/>
    <property type="match status" value="1"/>
</dbReference>
<dbReference type="Gene3D" id="3.20.20.70">
    <property type="entry name" value="Aldolase class I"/>
    <property type="match status" value="1"/>
</dbReference>
<dbReference type="HAMAP" id="MF_01511">
    <property type="entry name" value="GMP_reduct_type2"/>
    <property type="match status" value="1"/>
</dbReference>
<dbReference type="InterPro" id="IPR013785">
    <property type="entry name" value="Aldolase_TIM"/>
</dbReference>
<dbReference type="InterPro" id="IPR050139">
    <property type="entry name" value="GMP_reductase"/>
</dbReference>
<dbReference type="InterPro" id="IPR005994">
    <property type="entry name" value="GuaC_type_2"/>
</dbReference>
<dbReference type="InterPro" id="IPR015875">
    <property type="entry name" value="IMP_DH/GMP_Rdtase_CS"/>
</dbReference>
<dbReference type="InterPro" id="IPR001093">
    <property type="entry name" value="IMP_DH_GMPRt"/>
</dbReference>
<dbReference type="NCBIfam" id="TIGR01306">
    <property type="entry name" value="GMP_reduct_2"/>
    <property type="match status" value="1"/>
</dbReference>
<dbReference type="NCBIfam" id="NF003966">
    <property type="entry name" value="PRK05458.1"/>
    <property type="match status" value="1"/>
</dbReference>
<dbReference type="PANTHER" id="PTHR43170">
    <property type="entry name" value="GMP REDUCTASE"/>
    <property type="match status" value="1"/>
</dbReference>
<dbReference type="PANTHER" id="PTHR43170:SF5">
    <property type="entry name" value="GMP REDUCTASE"/>
    <property type="match status" value="1"/>
</dbReference>
<dbReference type="Pfam" id="PF00478">
    <property type="entry name" value="IMPDH"/>
    <property type="match status" value="1"/>
</dbReference>
<dbReference type="PIRSF" id="PIRSF036500">
    <property type="entry name" value="GMP_red_Firmic"/>
    <property type="match status" value="1"/>
</dbReference>
<dbReference type="SMART" id="SM01240">
    <property type="entry name" value="IMPDH"/>
    <property type="match status" value="1"/>
</dbReference>
<dbReference type="SUPFAM" id="SSF51412">
    <property type="entry name" value="Inosine monophosphate dehydrogenase (IMPDH)"/>
    <property type="match status" value="1"/>
</dbReference>
<dbReference type="PROSITE" id="PS00487">
    <property type="entry name" value="IMP_DH_GMP_RED"/>
    <property type="match status" value="1"/>
</dbReference>
<protein>
    <recommendedName>
        <fullName evidence="1">GMP reductase</fullName>
        <ecNumber evidence="1">1.7.1.7</ecNumber>
    </recommendedName>
    <alternativeName>
        <fullName evidence="1">Guanosine 5'-monophosphate oxidoreductase</fullName>
        <shortName evidence="1">Guanosine monophosphate reductase</shortName>
    </alternativeName>
</protein>
<proteinExistence type="inferred from homology"/>
<accession>Q1J6M7</accession>
<reference key="1">
    <citation type="journal article" date="2006" name="Proc. Natl. Acad. Sci. U.S.A.">
        <title>Molecular genetic anatomy of inter- and intraserotype variation in the human bacterial pathogen group A Streptococcus.</title>
        <authorList>
            <person name="Beres S.B."/>
            <person name="Richter E.W."/>
            <person name="Nagiec M.J."/>
            <person name="Sumby P."/>
            <person name="Porcella S.F."/>
            <person name="DeLeo F.R."/>
            <person name="Musser J.M."/>
        </authorList>
    </citation>
    <scope>NUCLEOTIDE SEQUENCE [LARGE SCALE GENOMIC DNA]</scope>
    <source>
        <strain>MGAS10750</strain>
    </source>
</reference>
<organism>
    <name type="scientific">Streptococcus pyogenes serotype M4 (strain MGAS10750)</name>
    <dbReference type="NCBI Taxonomy" id="370554"/>
    <lineage>
        <taxon>Bacteria</taxon>
        <taxon>Bacillati</taxon>
        <taxon>Bacillota</taxon>
        <taxon>Bacilli</taxon>
        <taxon>Lactobacillales</taxon>
        <taxon>Streptococcaceae</taxon>
        <taxon>Streptococcus</taxon>
    </lineage>
</organism>